<accession>Q0CHZ8</accession>
<name>EXGD_ASPTN</name>
<organism>
    <name type="scientific">Aspergillus terreus (strain NIH 2624 / FGSC A1156)</name>
    <dbReference type="NCBI Taxonomy" id="341663"/>
    <lineage>
        <taxon>Eukaryota</taxon>
        <taxon>Fungi</taxon>
        <taxon>Dikarya</taxon>
        <taxon>Ascomycota</taxon>
        <taxon>Pezizomycotina</taxon>
        <taxon>Eurotiomycetes</taxon>
        <taxon>Eurotiomycetidae</taxon>
        <taxon>Eurotiales</taxon>
        <taxon>Aspergillaceae</taxon>
        <taxon>Aspergillus</taxon>
        <taxon>Aspergillus subgen. Circumdati</taxon>
    </lineage>
</organism>
<evidence type="ECO:0000250" key="1"/>
<evidence type="ECO:0000255" key="2"/>
<evidence type="ECO:0000256" key="3">
    <source>
        <dbReference type="SAM" id="MobiDB-lite"/>
    </source>
</evidence>
<evidence type="ECO:0000305" key="4"/>
<dbReference type="EC" id="3.2.1.58"/>
<dbReference type="EMBL" id="CH476602">
    <property type="protein sequence ID" value="EAU33230.1"/>
    <property type="molecule type" value="Genomic_DNA"/>
</dbReference>
<dbReference type="RefSeq" id="XP_001215864.1">
    <property type="nucleotide sequence ID" value="XM_001215864.1"/>
</dbReference>
<dbReference type="SMR" id="Q0CHZ8"/>
<dbReference type="STRING" id="341663.Q0CHZ8"/>
<dbReference type="GlyCosmos" id="Q0CHZ8">
    <property type="glycosylation" value="7 sites, No reported glycans"/>
</dbReference>
<dbReference type="EnsemblFungi" id="EAU33230">
    <property type="protein sequence ID" value="EAU33230"/>
    <property type="gene ID" value="ATEG_06686"/>
</dbReference>
<dbReference type="GeneID" id="4322028"/>
<dbReference type="VEuPathDB" id="FungiDB:ATEG_06686"/>
<dbReference type="eggNOG" id="ENOG502QRG8">
    <property type="taxonomic scope" value="Eukaryota"/>
</dbReference>
<dbReference type="HOGENOM" id="CLU_004624_4_0_1"/>
<dbReference type="OMA" id="WYWTWKT"/>
<dbReference type="OrthoDB" id="62120at2759"/>
<dbReference type="Proteomes" id="UP000007963">
    <property type="component" value="Unassembled WGS sequence"/>
</dbReference>
<dbReference type="GO" id="GO:0009986">
    <property type="term" value="C:cell surface"/>
    <property type="evidence" value="ECO:0007669"/>
    <property type="project" value="TreeGrafter"/>
</dbReference>
<dbReference type="GO" id="GO:0005576">
    <property type="term" value="C:extracellular region"/>
    <property type="evidence" value="ECO:0007669"/>
    <property type="project" value="TreeGrafter"/>
</dbReference>
<dbReference type="GO" id="GO:0005886">
    <property type="term" value="C:plasma membrane"/>
    <property type="evidence" value="ECO:0007669"/>
    <property type="project" value="UniProtKB-SubCell"/>
</dbReference>
<dbReference type="GO" id="GO:0004338">
    <property type="term" value="F:glucan exo-1,3-beta-glucosidase activity"/>
    <property type="evidence" value="ECO:0007669"/>
    <property type="project" value="UniProtKB-EC"/>
</dbReference>
<dbReference type="GO" id="GO:0071555">
    <property type="term" value="P:cell wall organization"/>
    <property type="evidence" value="ECO:0007669"/>
    <property type="project" value="UniProtKB-KW"/>
</dbReference>
<dbReference type="GO" id="GO:0009251">
    <property type="term" value="P:glucan catabolic process"/>
    <property type="evidence" value="ECO:0007669"/>
    <property type="project" value="TreeGrafter"/>
</dbReference>
<dbReference type="FunFam" id="3.20.20.80:FF:000033">
    <property type="entry name" value="Glucan 1,3-beta-glucosidase A"/>
    <property type="match status" value="1"/>
</dbReference>
<dbReference type="Gene3D" id="3.20.20.80">
    <property type="entry name" value="Glycosidases"/>
    <property type="match status" value="1"/>
</dbReference>
<dbReference type="InterPro" id="IPR001547">
    <property type="entry name" value="Glyco_hydro_5"/>
</dbReference>
<dbReference type="InterPro" id="IPR017853">
    <property type="entry name" value="Glycoside_hydrolase_SF"/>
</dbReference>
<dbReference type="InterPro" id="IPR050386">
    <property type="entry name" value="Glycosyl_hydrolase_5"/>
</dbReference>
<dbReference type="PANTHER" id="PTHR31297:SF34">
    <property type="entry name" value="GLUCAN 1,3-BETA-GLUCOSIDASE 2"/>
    <property type="match status" value="1"/>
</dbReference>
<dbReference type="PANTHER" id="PTHR31297">
    <property type="entry name" value="GLUCAN ENDO-1,6-BETA-GLUCOSIDASE B"/>
    <property type="match status" value="1"/>
</dbReference>
<dbReference type="Pfam" id="PF00150">
    <property type="entry name" value="Cellulase"/>
    <property type="match status" value="1"/>
</dbReference>
<dbReference type="SUPFAM" id="SSF51445">
    <property type="entry name" value="(Trans)glycosidases"/>
    <property type="match status" value="1"/>
</dbReference>
<sequence length="838" mass="96217">MPSHSRSRDRYRGRDESEPERDRRHYSRRRYRETDYEDDELDDDDYDRRRRYRRDDVYRRSRGQSRGYESHEYHEDDANEYDLAGEDPAVPLRRSRGDERERSAGAYDDYDSPRRRDRHRDGDRRRRHRAYEAEGSPPRGAPDHRRHRSRDDRRERAYESEREARRHRRRERGREAAAAKHQSSDSTNSGSHLLSADALAKLRSEYDKEDRSRAKADAKAEKKQRRKRPVVADQPRRLDPFPEETPRGQSKGRIVSGAYLEEGRSPEMKVRHRGGGGGGGAGSKWRDEGASDSDMDGAEGGTPFWKKKKTWIAVGVVVVLLAIIIPVAVVVSKKNNEKKSDSTTDDTTPRNSNLDGISRDSIPDYAKGTVLDPWTWYDTMGFNVTFTNETVGGLSIMGLNSTWDDSTRPNDNVPPLNEPFPYGSQPIRGVNLGGWLSIEPFIVPSLFESYSSVDGVVDEWTLCQKLGDSAASRIERHYATFITEQDFADIRDAGLDHVRIQFSYWAVTTYDGDQYVPKISWRYLLRAIEYCRKYGLRVKLDPHGIPGSQNGWNHSGRQGPIGWLNGTDGQLNRKRSLEMHDQLSQFFAQDRYKNIVTIYGLVNEPMMLSLPVEDVLDWSTEATKLIQKNGITAYVTVHDGFLNLSKWKQMLKTRPDRMFLDTHQYTIFNTAQIVMKHTEKIKLVCNDWHSMIQQINTTSAGWGPTICGEWSQADTDCTKYLNNVGRGTRWEGTFSLTDSTAYCPTAKSGPSCSCSSANADPSQYSDQYKKFLKTYAEAQMSAFETAQGWFYWTWHTESAPQWSYKTAWKNGFMPQKAYAPDFKCGDDVPDFGDLPENY</sequence>
<keyword id="KW-0119">Carbohydrate metabolism</keyword>
<keyword id="KW-1003">Cell membrane</keyword>
<keyword id="KW-0961">Cell wall biogenesis/degradation</keyword>
<keyword id="KW-0325">Glycoprotein</keyword>
<keyword id="KW-0326">Glycosidase</keyword>
<keyword id="KW-0378">Hydrolase</keyword>
<keyword id="KW-0472">Membrane</keyword>
<keyword id="KW-0624">Polysaccharide degradation</keyword>
<keyword id="KW-1185">Reference proteome</keyword>
<keyword id="KW-0735">Signal-anchor</keyword>
<keyword id="KW-0812">Transmembrane</keyword>
<keyword id="KW-1133">Transmembrane helix</keyword>
<feature type="chain" id="PRO_0000395167" description="Probable glucan 1,3-beta-glucosidase D">
    <location>
        <begin position="1"/>
        <end position="838"/>
    </location>
</feature>
<feature type="topological domain" description="Cytoplasmic" evidence="2">
    <location>
        <begin position="1"/>
        <end position="310"/>
    </location>
</feature>
<feature type="transmembrane region" description="Helical; Signal-anchor for type II membrane protein" evidence="2">
    <location>
        <begin position="311"/>
        <end position="331"/>
    </location>
</feature>
<feature type="topological domain" description="Extracellular" evidence="2">
    <location>
        <begin position="332"/>
        <end position="838"/>
    </location>
</feature>
<feature type="region of interest" description="Disordered" evidence="3">
    <location>
        <begin position="1"/>
        <end position="298"/>
    </location>
</feature>
<feature type="region of interest" description="Disordered" evidence="3">
    <location>
        <begin position="335"/>
        <end position="359"/>
    </location>
</feature>
<feature type="compositionally biased region" description="Basic and acidic residues" evidence="3">
    <location>
        <begin position="1"/>
        <end position="23"/>
    </location>
</feature>
<feature type="compositionally biased region" description="Acidic residues" evidence="3">
    <location>
        <begin position="35"/>
        <end position="45"/>
    </location>
</feature>
<feature type="compositionally biased region" description="Basic and acidic residues" evidence="3">
    <location>
        <begin position="111"/>
        <end position="124"/>
    </location>
</feature>
<feature type="compositionally biased region" description="Basic and acidic residues" evidence="3">
    <location>
        <begin position="149"/>
        <end position="164"/>
    </location>
</feature>
<feature type="compositionally biased region" description="Basic and acidic residues" evidence="3">
    <location>
        <begin position="200"/>
        <end position="221"/>
    </location>
</feature>
<feature type="compositionally biased region" description="Basic and acidic residues" evidence="3">
    <location>
        <begin position="234"/>
        <end position="246"/>
    </location>
</feature>
<feature type="active site" description="Proton donor" evidence="1">
    <location>
        <position position="604"/>
    </location>
</feature>
<feature type="active site" description="Nucleophile" evidence="1">
    <location>
        <position position="709"/>
    </location>
</feature>
<feature type="glycosylation site" description="N-linked (GlcNAc...) asparagine" evidence="2">
    <location>
        <position position="383"/>
    </location>
</feature>
<feature type="glycosylation site" description="N-linked (GlcNAc...) asparagine" evidence="2">
    <location>
        <position position="388"/>
    </location>
</feature>
<feature type="glycosylation site" description="N-linked (GlcNAc...) asparagine" evidence="2">
    <location>
        <position position="400"/>
    </location>
</feature>
<feature type="glycosylation site" description="N-linked (GlcNAc...) asparagine" evidence="2">
    <location>
        <position position="553"/>
    </location>
</feature>
<feature type="glycosylation site" description="N-linked (GlcNAc...) asparagine" evidence="2">
    <location>
        <position position="565"/>
    </location>
</feature>
<feature type="glycosylation site" description="N-linked (GlcNAc...) asparagine" evidence="2">
    <location>
        <position position="643"/>
    </location>
</feature>
<feature type="glycosylation site" description="N-linked (GlcNAc...) asparagine" evidence="2">
    <location>
        <position position="696"/>
    </location>
</feature>
<comment type="function">
    <text evidence="1">Glucosidase involved in the degradation of cellulosic biomass. Active on lichenan (By similarity).</text>
</comment>
<comment type="catalytic activity">
    <reaction>
        <text>Successive hydrolysis of beta-D-glucose units from the non-reducing ends of (1-&gt;3)-beta-D-glucans, releasing alpha-glucose.</text>
        <dbReference type="EC" id="3.2.1.58"/>
    </reaction>
</comment>
<comment type="subcellular location">
    <subcellularLocation>
        <location evidence="4">Cell membrane</location>
        <topology evidence="4">Single-pass type II membrane protein</topology>
    </subcellularLocation>
</comment>
<comment type="similarity">
    <text evidence="4">Belongs to the glycosyl hydrolase 5 (cellulase A) family.</text>
</comment>
<protein>
    <recommendedName>
        <fullName>Probable glucan 1,3-beta-glucosidase D</fullName>
        <ecNumber>3.2.1.58</ecNumber>
    </recommendedName>
    <alternativeName>
        <fullName>Exo-1,3-beta-glucanase D</fullName>
    </alternativeName>
</protein>
<gene>
    <name type="primary">exgD</name>
    <name type="ORF">ATEG_06686</name>
</gene>
<reference key="1">
    <citation type="submission" date="2005-09" db="EMBL/GenBank/DDBJ databases">
        <title>Annotation of the Aspergillus terreus NIH2624 genome.</title>
        <authorList>
            <person name="Birren B.W."/>
            <person name="Lander E.S."/>
            <person name="Galagan J.E."/>
            <person name="Nusbaum C."/>
            <person name="Devon K."/>
            <person name="Henn M."/>
            <person name="Ma L.-J."/>
            <person name="Jaffe D.B."/>
            <person name="Butler J."/>
            <person name="Alvarez P."/>
            <person name="Gnerre S."/>
            <person name="Grabherr M."/>
            <person name="Kleber M."/>
            <person name="Mauceli E.W."/>
            <person name="Brockman W."/>
            <person name="Rounsley S."/>
            <person name="Young S.K."/>
            <person name="LaButti K."/>
            <person name="Pushparaj V."/>
            <person name="DeCaprio D."/>
            <person name="Crawford M."/>
            <person name="Koehrsen M."/>
            <person name="Engels R."/>
            <person name="Montgomery P."/>
            <person name="Pearson M."/>
            <person name="Howarth C."/>
            <person name="Larson L."/>
            <person name="Luoma S."/>
            <person name="White J."/>
            <person name="Alvarado L."/>
            <person name="Kodira C.D."/>
            <person name="Zeng Q."/>
            <person name="Oleary S."/>
            <person name="Yandava C."/>
            <person name="Denning D.W."/>
            <person name="Nierman W.C."/>
            <person name="Milne T."/>
            <person name="Madden K."/>
        </authorList>
    </citation>
    <scope>NUCLEOTIDE SEQUENCE [LARGE SCALE GENOMIC DNA]</scope>
    <source>
        <strain>NIH 2624 / FGSC A1156</strain>
    </source>
</reference>
<proteinExistence type="inferred from homology"/>